<reference key="1">
    <citation type="journal article" date="2005" name="Nature">
        <title>Sequencing of Aspergillus nidulans and comparative analysis with A. fumigatus and A. oryzae.</title>
        <authorList>
            <person name="Galagan J.E."/>
            <person name="Calvo S.E."/>
            <person name="Cuomo C."/>
            <person name="Ma L.-J."/>
            <person name="Wortman J.R."/>
            <person name="Batzoglou S."/>
            <person name="Lee S.-I."/>
            <person name="Bastuerkmen M."/>
            <person name="Spevak C.C."/>
            <person name="Clutterbuck J."/>
            <person name="Kapitonov V."/>
            <person name="Jurka J."/>
            <person name="Scazzocchio C."/>
            <person name="Farman M.L."/>
            <person name="Butler J."/>
            <person name="Purcell S."/>
            <person name="Harris S."/>
            <person name="Braus G.H."/>
            <person name="Draht O."/>
            <person name="Busch S."/>
            <person name="D'Enfert C."/>
            <person name="Bouchier C."/>
            <person name="Goldman G.H."/>
            <person name="Bell-Pedersen D."/>
            <person name="Griffiths-Jones S."/>
            <person name="Doonan J.H."/>
            <person name="Yu J."/>
            <person name="Vienken K."/>
            <person name="Pain A."/>
            <person name="Freitag M."/>
            <person name="Selker E.U."/>
            <person name="Archer D.B."/>
            <person name="Penalva M.A."/>
            <person name="Oakley B.R."/>
            <person name="Momany M."/>
            <person name="Tanaka T."/>
            <person name="Kumagai T."/>
            <person name="Asai K."/>
            <person name="Machida M."/>
            <person name="Nierman W.C."/>
            <person name="Denning D.W."/>
            <person name="Caddick M.X."/>
            <person name="Hynes M."/>
            <person name="Paoletti M."/>
            <person name="Fischer R."/>
            <person name="Miller B.L."/>
            <person name="Dyer P.S."/>
            <person name="Sachs M.S."/>
            <person name="Osmani S.A."/>
            <person name="Birren B.W."/>
        </authorList>
    </citation>
    <scope>NUCLEOTIDE SEQUENCE [LARGE SCALE GENOMIC DNA]</scope>
    <source>
        <strain>FGSC A4 / ATCC 38163 / CBS 112.46 / NRRL 194 / M139</strain>
    </source>
</reference>
<reference key="2">
    <citation type="journal article" date="2009" name="Fungal Genet. Biol.">
        <title>The 2008 update of the Aspergillus nidulans genome annotation: a community effort.</title>
        <authorList>
            <person name="Wortman J.R."/>
            <person name="Gilsenan J.M."/>
            <person name="Joardar V."/>
            <person name="Deegan J."/>
            <person name="Clutterbuck J."/>
            <person name="Andersen M.R."/>
            <person name="Archer D."/>
            <person name="Bencina M."/>
            <person name="Braus G."/>
            <person name="Coutinho P."/>
            <person name="von Dohren H."/>
            <person name="Doonan J."/>
            <person name="Driessen A.J."/>
            <person name="Durek P."/>
            <person name="Espeso E."/>
            <person name="Fekete E."/>
            <person name="Flipphi M."/>
            <person name="Estrada C.G."/>
            <person name="Geysens S."/>
            <person name="Goldman G."/>
            <person name="de Groot P.W."/>
            <person name="Hansen K."/>
            <person name="Harris S.D."/>
            <person name="Heinekamp T."/>
            <person name="Helmstaedt K."/>
            <person name="Henrissat B."/>
            <person name="Hofmann G."/>
            <person name="Homan T."/>
            <person name="Horio T."/>
            <person name="Horiuchi H."/>
            <person name="James S."/>
            <person name="Jones M."/>
            <person name="Karaffa L."/>
            <person name="Karanyi Z."/>
            <person name="Kato M."/>
            <person name="Keller N."/>
            <person name="Kelly D.E."/>
            <person name="Kiel J.A."/>
            <person name="Kim J.M."/>
            <person name="van der Klei I.J."/>
            <person name="Klis F.M."/>
            <person name="Kovalchuk A."/>
            <person name="Krasevec N."/>
            <person name="Kubicek C.P."/>
            <person name="Liu B."/>
            <person name="Maccabe A."/>
            <person name="Meyer V."/>
            <person name="Mirabito P."/>
            <person name="Miskei M."/>
            <person name="Mos M."/>
            <person name="Mullins J."/>
            <person name="Nelson D.R."/>
            <person name="Nielsen J."/>
            <person name="Oakley B.R."/>
            <person name="Osmani S.A."/>
            <person name="Pakula T."/>
            <person name="Paszewski A."/>
            <person name="Paulsen I."/>
            <person name="Pilsyk S."/>
            <person name="Pocsi I."/>
            <person name="Punt P.J."/>
            <person name="Ram A.F."/>
            <person name="Ren Q."/>
            <person name="Robellet X."/>
            <person name="Robson G."/>
            <person name="Seiboth B."/>
            <person name="van Solingen P."/>
            <person name="Specht T."/>
            <person name="Sun J."/>
            <person name="Taheri-Talesh N."/>
            <person name="Takeshita N."/>
            <person name="Ussery D."/>
            <person name="vanKuyk P.A."/>
            <person name="Visser H."/>
            <person name="van de Vondervoort P.J."/>
            <person name="de Vries R.P."/>
            <person name="Walton J."/>
            <person name="Xiang X."/>
            <person name="Xiong Y."/>
            <person name="Zeng A.P."/>
            <person name="Brandt B.W."/>
            <person name="Cornell M.J."/>
            <person name="van den Hondel C.A."/>
            <person name="Visser J."/>
            <person name="Oliver S.G."/>
            <person name="Turner G."/>
        </authorList>
    </citation>
    <scope>GENOME REANNOTATION</scope>
    <source>
        <strain>FGSC A4 / ATCC 38163 / CBS 112.46 / NRRL 194 / M139</strain>
    </source>
</reference>
<reference key="3">
    <citation type="journal article" date="2000" name="Mol. Gen. Genet.">
        <title>The role of ABC transporters from Aspergillus nidulans in protection against cytotoxic agents and in antibiotic production.</title>
        <authorList>
            <person name="Andrade A.C."/>
            <person name="Van Nistelrooy J.G."/>
            <person name="Peery R.B."/>
            <person name="Skatrud P.L."/>
            <person name="De Waard M.A."/>
        </authorList>
    </citation>
    <scope>FUNCTION</scope>
    <scope>INDUCTION</scope>
    <scope>DISRUPTION PHENOTYPE</scope>
    <scope>CATALYTIC ACTIVITY</scope>
    <scope>ACTIVITY REGULATION</scope>
</reference>
<reference key="4">
    <citation type="journal article" date="2002" name="Appl. Environ. Microbiol.">
        <title>Quantitative analysis of the relative transcript levels of ABC transporter Atr genes in Aspergillus nidulans by real-time reverse transcription-PCR assay.</title>
        <authorList>
            <person name="Semighini C.P."/>
            <person name="Marins M."/>
            <person name="Goldman M.H."/>
            <person name="Goldman G.H."/>
        </authorList>
    </citation>
    <scope>INDUCTION</scope>
</reference>
<keyword id="KW-0067">ATP-binding</keyword>
<keyword id="KW-1003">Cell membrane</keyword>
<keyword id="KW-0325">Glycoprotein</keyword>
<keyword id="KW-0472">Membrane</keyword>
<keyword id="KW-0547">Nucleotide-binding</keyword>
<keyword id="KW-1185">Reference proteome</keyword>
<keyword id="KW-0677">Repeat</keyword>
<keyword id="KW-0812">Transmembrane</keyword>
<keyword id="KW-1133">Transmembrane helix</keyword>
<keyword id="KW-0813">Transport</keyword>
<evidence type="ECO:0000255" key="1"/>
<evidence type="ECO:0000255" key="2">
    <source>
        <dbReference type="PROSITE-ProRule" id="PRU00434"/>
    </source>
</evidence>
<evidence type="ECO:0000255" key="3">
    <source>
        <dbReference type="PROSITE-ProRule" id="PRU00441"/>
    </source>
</evidence>
<evidence type="ECO:0000255" key="4">
    <source>
        <dbReference type="PROSITE-ProRule" id="PRU00498"/>
    </source>
</evidence>
<evidence type="ECO:0000256" key="5">
    <source>
        <dbReference type="SAM" id="MobiDB-lite"/>
    </source>
</evidence>
<evidence type="ECO:0000269" key="6">
    <source>
    </source>
</evidence>
<evidence type="ECO:0000269" key="7">
    <source>
    </source>
</evidence>
<evidence type="ECO:0000303" key="8">
    <source>
    </source>
</evidence>
<evidence type="ECO:0000305" key="9"/>
<gene>
    <name evidence="8" type="primary">atrD</name>
    <name type="ORF">ANIA_02300</name>
</gene>
<organism>
    <name type="scientific">Emericella nidulans (strain FGSC A4 / ATCC 38163 / CBS 112.46 / NRRL 194 / M139)</name>
    <name type="common">Aspergillus nidulans</name>
    <dbReference type="NCBI Taxonomy" id="227321"/>
    <lineage>
        <taxon>Eukaryota</taxon>
        <taxon>Fungi</taxon>
        <taxon>Dikarya</taxon>
        <taxon>Ascomycota</taxon>
        <taxon>Pezizomycotina</taxon>
        <taxon>Eurotiomycetes</taxon>
        <taxon>Eurotiomycetidae</taxon>
        <taxon>Eurotiales</taxon>
        <taxon>Aspergillaceae</taxon>
        <taxon>Aspergillus</taxon>
        <taxon>Aspergillus subgen. Nidulantes</taxon>
    </lineage>
</organism>
<comment type="function">
    <text evidence="6">Pleiotropic ABC efflux transporter involved in the protection of the cells against a wide range of toxic compounds (PubMed:10954082). Confers resistance to the azole fenarimol via efflux transport (PubMed:10954082). May also be involved in the secretion of penicillin (PubMed:10954082).</text>
</comment>
<comment type="activity regulation">
    <text evidence="6">Fenamirol efflux transporter activity is inhibited by the cyclosporin derivative PSC 833, nigericin, reserpine and valinomycin (PubMed:10954082). The effect of reserpine is transiant, while that of the cyclosporin derivative PSC 833, nigericin and valinomycin is proportional to the time of exposure (PubMed:10954082). Cyclohexinmide has inhibitory effect only when applied prior to addition of the fungicide (PubMed:10954082).</text>
</comment>
<comment type="subcellular location">
    <subcellularLocation>
        <location evidence="9">Cell membrane</location>
        <topology evidence="1">Multi-pass membrane protein</topology>
    </subcellularLocation>
</comment>
<comment type="induction">
    <text evidence="6 7">Expression is strongly increased in the presence of cycloheximide, camptothecin, imazalil, itraconazole, hygromycin and 4-nitroquinoline oxide (4-NQO).</text>
</comment>
<comment type="disruption phenotype">
    <text evidence="6">Leads to the cellular accumulation of fenarimol (PubMed:10954082). Leads to increased susceptibility to cycloheximide, the cyclosporin derivative PSC 833, nigericin and valinomycin (PubMed:10954082).</text>
</comment>
<comment type="similarity">
    <text evidence="9">Belongs to the ABC transporter superfamily. ABCB family. Multidrug resistance exporter (TC 3.A.1.201) subfamily.</text>
</comment>
<protein>
    <recommendedName>
        <fullName>ABC multidrug transporter atrD</fullName>
    </recommendedName>
</protein>
<sequence>MSPLETNPLSPETAMREPAETSTTEEQASTPHAADEKKILSDLSAPSSTTATPADKEHRPKSSSSNNAVSVNEVDALIAHLPEDERQVLKTQLEEIKVNISFFGLWRYATKMDILIMVISTICAIAAGAALPLFTAPSTFQRIMLYQISYDEFYDELTKNVLYFVYLGIGEFVTVYVSTVGFIYTGEHATQKIREYYLESILRQNIGYFDKLGAGEVTTRITADTNLIQDGISEKVGLTLTALATFVTAFIIAYVKYWKLALICSSTIVALVLTMGGGSQFIIKYSKKSLDSYGAGGTVAEEVISSIRNATAFGTQDKLAKQYEVHLDEAEKWGTKNQIVMGFMIGAMFGLMYSNYGLGFWMGSRFLVDGAVDVGDILTVLMAILIGSFSLGNVSPNAQAFTNAVAAAAKIFGTIDRQSPLDPYSNEGKTLDHFEGHIELRNVKHIYPSRPEVTVMEDVSLSMPAGKTTALVGPSGSGKSTVVGLVERFYMPVRGTVLLDGHDIKDLNLRWLRQQISLVSQEPVLFGTTIYKNIRHGLIGTKYENESEDKVRELIENAAKMANAHDFITALPEGYETNVGQRGFLLSGGQKQRIAIARAVVSDPKILLLDEATSALDTKSEGVVQAALERAAEGRTTIVIAHRLSTIKTAHNIVVLVNGKIAEQGTHDELVDRGGAYRKLVEAQRINEQKEADALEDADAEDLTNADIAKIKTASSASSDLDGKPTTIDRTGTHKSVSSAILSKRPPETTPKYSLWTLLKFVASFNRPEIPYMLIGLVFSVLAGGGQPTQAVLYAKAISTLSLPESQYSKLRHDADFWSLMFFVVGIIQFITQSTNGAAFAVCSERLIRRARSTAFRTILRQDIAFFDKEENSTGALTSFLSTETKHLSGVSGVTLGTILMTSTTLGAAIIIALAIGWKLALVCISVVPVLLACGFYRFYMLAQFQSRSKLAYEGSANFACEATSSIRTVASLTRERDVWEIYHAQLDAQGRTSLISVLRSSLLYASSQALVFFCVALGFWYGGTLLGHHEYDIFRFFVCFSEILFGAQSAGTVFSFAPDMGKAKNAAAEFRRLFDRKPQIDNWSEEGEKLETVEGEIEFRNVHFRYPTRPEQPVLRGLDLTVKPGQYVALVGPSGCGKSTTIALLERFYDAIAGSILVDGKDISKLNINSYRSFLSLVSQEPTLYQGTIKENILLGIVEDDVPEEFLIKACKDANIYDFIMSLPEGFNTVVGSKGGMLSGGQKQRVAIARALLRDPKILLLDEATSALDSESEKVVQAALDAAARGRTTIAVAHRLSTIQKADVIYVFDQGKIVESGTHSELVQKKGRYYELVNLQSLGKGH</sequence>
<feature type="chain" id="PRO_0000449468" description="ABC multidrug transporter atrD">
    <location>
        <begin position="1"/>
        <end position="1343"/>
    </location>
</feature>
<feature type="transmembrane region" description="Helical" evidence="1 3">
    <location>
        <begin position="114"/>
        <end position="134"/>
    </location>
</feature>
<feature type="transmembrane region" description="Helical" evidence="1 3">
    <location>
        <begin position="163"/>
        <end position="183"/>
    </location>
</feature>
<feature type="transmembrane region" description="Helical" evidence="1 3">
    <location>
        <begin position="235"/>
        <end position="255"/>
    </location>
</feature>
<feature type="transmembrane region" description="Helical" evidence="1 3">
    <location>
        <begin position="263"/>
        <end position="283"/>
    </location>
</feature>
<feature type="transmembrane region" description="Helical" evidence="1 3">
    <location>
        <begin position="339"/>
        <end position="359"/>
    </location>
</feature>
<feature type="transmembrane region" description="Helical" evidence="1 3">
    <location>
        <begin position="366"/>
        <end position="386"/>
    </location>
</feature>
<feature type="transmembrane region" description="Helical" evidence="1 3">
    <location>
        <begin position="773"/>
        <end position="793"/>
    </location>
</feature>
<feature type="transmembrane region" description="Helical" evidence="1 3">
    <location>
        <begin position="820"/>
        <end position="840"/>
    </location>
</feature>
<feature type="transmembrane region" description="Helical" evidence="1 3">
    <location>
        <begin position="887"/>
        <end position="907"/>
    </location>
</feature>
<feature type="transmembrane region" description="Helical" evidence="1 3">
    <location>
        <begin position="920"/>
        <end position="942"/>
    </location>
</feature>
<feature type="transmembrane region" description="Helical" evidence="1 3">
    <location>
        <begin position="1010"/>
        <end position="1030"/>
    </location>
</feature>
<feature type="transmembrane region" description="Helical" evidence="1 3">
    <location>
        <begin position="1037"/>
        <end position="1057"/>
    </location>
</feature>
<feature type="domain" description="ABC transmembrane type-1 1" evidence="3">
    <location>
        <begin position="115"/>
        <end position="403"/>
    </location>
</feature>
<feature type="domain" description="ABC transporter 1" evidence="2">
    <location>
        <begin position="438"/>
        <end position="683"/>
    </location>
</feature>
<feature type="domain" description="ABC transmembrane type-1 2" evidence="3">
    <location>
        <begin position="774"/>
        <end position="1063"/>
    </location>
</feature>
<feature type="domain" description="ABC transporter 2" evidence="2">
    <location>
        <begin position="1098"/>
        <end position="1336"/>
    </location>
</feature>
<feature type="region of interest" description="Disordered" evidence="5">
    <location>
        <begin position="1"/>
        <end position="67"/>
    </location>
</feature>
<feature type="compositionally biased region" description="Polar residues" evidence="5">
    <location>
        <begin position="1"/>
        <end position="10"/>
    </location>
</feature>
<feature type="compositionally biased region" description="Low complexity" evidence="5">
    <location>
        <begin position="20"/>
        <end position="31"/>
    </location>
</feature>
<feature type="binding site" evidence="2">
    <location>
        <begin position="473"/>
        <end position="480"/>
    </location>
    <ligand>
        <name>ATP</name>
        <dbReference type="ChEBI" id="CHEBI:30616"/>
    </ligand>
</feature>
<feature type="binding site" evidence="2">
    <location>
        <begin position="1133"/>
        <end position="1140"/>
    </location>
    <ligand>
        <name>ATP</name>
        <dbReference type="ChEBI" id="CHEBI:30616"/>
    </ligand>
</feature>
<feature type="glycosylation site" description="N-linked (GlcNAc...) asparagine" evidence="4">
    <location>
        <position position="99"/>
    </location>
</feature>
<feature type="glycosylation site" description="N-linked (GlcNAc...) asparagine" evidence="4">
    <location>
        <position position="309"/>
    </location>
</feature>
<feature type="glycosylation site" description="N-linked (GlcNAc...) asparagine" evidence="4">
    <location>
        <position position="545"/>
    </location>
</feature>
<feature type="glycosylation site" description="N-linked (GlcNAc...) asparagine" evidence="4">
    <location>
        <position position="872"/>
    </location>
</feature>
<feature type="glycosylation site" description="N-linked (GlcNAc...) asparagine" evidence="4">
    <location>
        <position position="1083"/>
    </location>
</feature>
<proteinExistence type="evidence at protein level"/>
<name>ATRD_EMENI</name>
<accession>Q5BAY0</accession>
<accession>A0A1U8QYB9</accession>
<accession>C8VN48</accession>
<dbReference type="EMBL" id="AACD01000038">
    <property type="protein sequence ID" value="EAA64411.1"/>
    <property type="molecule type" value="Genomic_DNA"/>
</dbReference>
<dbReference type="EMBL" id="BN001307">
    <property type="protein sequence ID" value="CBF86562.1"/>
    <property type="molecule type" value="Genomic_DNA"/>
</dbReference>
<dbReference type="RefSeq" id="XP_659904.1">
    <property type="nucleotide sequence ID" value="XM_654812.1"/>
</dbReference>
<dbReference type="SMR" id="Q5BAY0"/>
<dbReference type="FunCoup" id="Q5BAY0">
    <property type="interactions" value="755"/>
</dbReference>
<dbReference type="GlyCosmos" id="Q5BAY0">
    <property type="glycosylation" value="5 sites, No reported glycans"/>
</dbReference>
<dbReference type="EnsemblFungi" id="CBF86562">
    <property type="protein sequence ID" value="CBF86562"/>
    <property type="gene ID" value="ANIA_02300"/>
</dbReference>
<dbReference type="GeneID" id="2875050"/>
<dbReference type="KEGG" id="ani:ANIA_02300"/>
<dbReference type="eggNOG" id="KOG0055">
    <property type="taxonomic scope" value="Eukaryota"/>
</dbReference>
<dbReference type="HOGENOM" id="CLU_000604_17_2_1"/>
<dbReference type="InParanoid" id="Q5BAY0"/>
<dbReference type="OMA" id="IGMAAPY"/>
<dbReference type="OrthoDB" id="6500128at2759"/>
<dbReference type="Proteomes" id="UP000000560">
    <property type="component" value="Chromosome VII"/>
</dbReference>
<dbReference type="GO" id="GO:0016020">
    <property type="term" value="C:membrane"/>
    <property type="evidence" value="ECO:0000318"/>
    <property type="project" value="GO_Central"/>
</dbReference>
<dbReference type="GO" id="GO:0005886">
    <property type="term" value="C:plasma membrane"/>
    <property type="evidence" value="ECO:0007669"/>
    <property type="project" value="UniProtKB-SubCell"/>
</dbReference>
<dbReference type="GO" id="GO:0140359">
    <property type="term" value="F:ABC-type transporter activity"/>
    <property type="evidence" value="ECO:0007669"/>
    <property type="project" value="InterPro"/>
</dbReference>
<dbReference type="GO" id="GO:0005524">
    <property type="term" value="F:ATP binding"/>
    <property type="evidence" value="ECO:0007669"/>
    <property type="project" value="UniProtKB-KW"/>
</dbReference>
<dbReference type="GO" id="GO:0016887">
    <property type="term" value="F:ATP hydrolysis activity"/>
    <property type="evidence" value="ECO:0007669"/>
    <property type="project" value="InterPro"/>
</dbReference>
<dbReference type="GO" id="GO:0042626">
    <property type="term" value="F:ATPase-coupled transmembrane transporter activity"/>
    <property type="evidence" value="ECO:0000318"/>
    <property type="project" value="GO_Central"/>
</dbReference>
<dbReference type="GO" id="GO:0055085">
    <property type="term" value="P:transmembrane transport"/>
    <property type="evidence" value="ECO:0000318"/>
    <property type="project" value="GO_Central"/>
</dbReference>
<dbReference type="CDD" id="cd18577">
    <property type="entry name" value="ABC_6TM_Pgp_ABCB1_D1_like"/>
    <property type="match status" value="1"/>
</dbReference>
<dbReference type="CDD" id="cd18578">
    <property type="entry name" value="ABC_6TM_Pgp_ABCB1_D2_like"/>
    <property type="match status" value="1"/>
</dbReference>
<dbReference type="CDD" id="cd03249">
    <property type="entry name" value="ABC_MTABC3_MDL1_MDL2"/>
    <property type="match status" value="2"/>
</dbReference>
<dbReference type="FunFam" id="1.20.1560.10:FF:000102">
    <property type="entry name" value="ABC multidrug transporter Mdr1"/>
    <property type="match status" value="1"/>
</dbReference>
<dbReference type="FunFam" id="1.20.1560.10:FF:000009">
    <property type="entry name" value="ABC transporter B family member 1"/>
    <property type="match status" value="1"/>
</dbReference>
<dbReference type="FunFam" id="3.40.50.300:FF:000251">
    <property type="entry name" value="ABC transporter B family member 19"/>
    <property type="match status" value="1"/>
</dbReference>
<dbReference type="FunFam" id="3.40.50.300:FF:000302">
    <property type="entry name" value="ATP-binding cassette subfamily B member 5"/>
    <property type="match status" value="1"/>
</dbReference>
<dbReference type="Gene3D" id="1.20.1560.10">
    <property type="entry name" value="ABC transporter type 1, transmembrane domain"/>
    <property type="match status" value="1"/>
</dbReference>
<dbReference type="Gene3D" id="3.40.50.300">
    <property type="entry name" value="P-loop containing nucleotide triphosphate hydrolases"/>
    <property type="match status" value="2"/>
</dbReference>
<dbReference type="InterPro" id="IPR003593">
    <property type="entry name" value="AAA+_ATPase"/>
</dbReference>
<dbReference type="InterPro" id="IPR011527">
    <property type="entry name" value="ABC1_TM_dom"/>
</dbReference>
<dbReference type="InterPro" id="IPR036640">
    <property type="entry name" value="ABC1_TM_sf"/>
</dbReference>
<dbReference type="InterPro" id="IPR003439">
    <property type="entry name" value="ABC_transporter-like_ATP-bd"/>
</dbReference>
<dbReference type="InterPro" id="IPR017871">
    <property type="entry name" value="ABC_transporter-like_CS"/>
</dbReference>
<dbReference type="InterPro" id="IPR027417">
    <property type="entry name" value="P-loop_NTPase"/>
</dbReference>
<dbReference type="InterPro" id="IPR039421">
    <property type="entry name" value="Type_1_exporter"/>
</dbReference>
<dbReference type="PANTHER" id="PTHR43394">
    <property type="entry name" value="ATP-DEPENDENT PERMEASE MDL1, MITOCHONDRIAL"/>
    <property type="match status" value="1"/>
</dbReference>
<dbReference type="PANTHER" id="PTHR43394:SF27">
    <property type="entry name" value="ATP-DEPENDENT TRANSLOCASE ABCB1-LIKE"/>
    <property type="match status" value="1"/>
</dbReference>
<dbReference type="Pfam" id="PF00664">
    <property type="entry name" value="ABC_membrane"/>
    <property type="match status" value="2"/>
</dbReference>
<dbReference type="Pfam" id="PF00005">
    <property type="entry name" value="ABC_tran"/>
    <property type="match status" value="2"/>
</dbReference>
<dbReference type="SMART" id="SM00382">
    <property type="entry name" value="AAA"/>
    <property type="match status" value="2"/>
</dbReference>
<dbReference type="SUPFAM" id="SSF90123">
    <property type="entry name" value="ABC transporter transmembrane region"/>
    <property type="match status" value="2"/>
</dbReference>
<dbReference type="SUPFAM" id="SSF52540">
    <property type="entry name" value="P-loop containing nucleoside triphosphate hydrolases"/>
    <property type="match status" value="2"/>
</dbReference>
<dbReference type="PROSITE" id="PS50929">
    <property type="entry name" value="ABC_TM1F"/>
    <property type="match status" value="2"/>
</dbReference>
<dbReference type="PROSITE" id="PS00211">
    <property type="entry name" value="ABC_TRANSPORTER_1"/>
    <property type="match status" value="2"/>
</dbReference>
<dbReference type="PROSITE" id="PS50893">
    <property type="entry name" value="ABC_TRANSPORTER_2"/>
    <property type="match status" value="2"/>
</dbReference>